<keyword id="KW-0009">Actin-binding</keyword>
<keyword id="KW-0067">ATP-binding</keyword>
<keyword id="KW-0963">Cytoplasm</keyword>
<keyword id="KW-0206">Cytoskeleton</keyword>
<keyword id="KW-1009">Hearing</keyword>
<keyword id="KW-0505">Motor protein</keyword>
<keyword id="KW-0518">Myosin</keyword>
<keyword id="KW-0547">Nucleotide-binding</keyword>
<keyword id="KW-1185">Reference proteome</keyword>
<keyword id="KW-0770">Synapse</keyword>
<reference key="1">
    <citation type="journal article" date="1995" name="Proc. Natl. Acad. Sci. U.S.A.">
        <title>Expression in cochlea and retina of myosin VIIa, the gene product defective in Usher syndrome type 1B.</title>
        <authorList>
            <person name="Hasson T."/>
            <person name="Heintzelman M.B."/>
            <person name="Santos-Sacchi J."/>
            <person name="Corey D.P."/>
            <person name="Mooseker M.S."/>
        </authorList>
    </citation>
    <scope>NUCLEOTIDE SEQUENCE [MRNA]</scope>
    <source>
        <tissue>Kidney proximal tubule</tissue>
    </source>
</reference>
<reference key="2">
    <citation type="journal article" date="1994" name="Proc. Natl. Acad. Sci. U.S.A.">
        <title>Identification and overlapping expression of multiple unconventional myosin genes in vertebrate cell types.</title>
        <authorList>
            <person name="Bement W.M."/>
            <person name="Hasson T."/>
            <person name="Wirth J.A."/>
            <person name="Cheney R.E."/>
            <person name="Mooseker M.S."/>
        </authorList>
    </citation>
    <scope>NUCLEOTIDE SEQUENCE [MRNA] OF 168-198</scope>
</reference>
<reference key="3">
    <citation type="journal article" date="1994" name="Proc. Natl. Acad. Sci. U.S.A.">
        <authorList>
            <person name="Bement W.M."/>
            <person name="Hasson T."/>
            <person name="Wirth J.A."/>
            <person name="Cheney R.E."/>
            <person name="Mooseker M.S."/>
        </authorList>
    </citation>
    <scope>ERRATUM OF PUBMED:8022818</scope>
</reference>
<proteinExistence type="evidence at transcript level"/>
<evidence type="ECO:0000250" key="1"/>
<evidence type="ECO:0000250" key="2">
    <source>
        <dbReference type="UniProtKB" id="P97479"/>
    </source>
</evidence>
<evidence type="ECO:0000250" key="3">
    <source>
        <dbReference type="UniProtKB" id="Q13402"/>
    </source>
</evidence>
<evidence type="ECO:0000255" key="4"/>
<evidence type="ECO:0000255" key="5">
    <source>
        <dbReference type="PROSITE-ProRule" id="PRU00782"/>
    </source>
</evidence>
<evidence type="ECO:0000305" key="6"/>
<gene>
    <name type="primary">MYO7A</name>
</gene>
<accession>Q28970</accession>
<accession>Q29064</accession>
<comment type="function">
    <text evidence="1">Myosins are actin-based motor molecules with ATPase activity. Unconventional myosins serve in intracellular movements. Their highly divergent tails bind to membranous compartments, which are then moved relative to actin filaments. In the retina, plays an important role in the renewal of the outer photoreceptor disks. Plays an important role in the distribution and migration of retinal pigment epithelial (RPE) melanosomes and phagosomes, and in the regulation of opsin transport in retinal photoreceptors. In the inner ear, plays an important role in differentiation, morphogenesis and organization of cochlear hair cell bundles. Motor protein that is a part of the functional network formed by USH1C, USH1G, CDH23 and MYO7A that mediates mechanotransduction in cochlear hair cells. Required for normal hearing. Involved in hair-cell vesicle trafficking of aminoglycosides, which are known to induce ototoxicity (By similarity).</text>
</comment>
<comment type="subunit">
    <text evidence="1 2 3">Might homodimerize in a two headed molecule through the formation of a coiled-coil rod (By similarity). Identified in a complex with USH1C and USH1G (By similarity). Interacts with MYRIP (By similarity). Interacts with RPE65 (By similarity). Interacts with CIB2 (By similarity). May interact with CALM (By similarity). Interacts with WHRN (By similarity). Interacts with PLEKHB1 (via PH domain) (By similarity). Interacts with PCDH15 (By similarity). Interacts with TWF2 (By similarity). Interacts with USH1G (By similarity). Interacts with MYH9 (By similarity). Interacts (via MyTH4-FERM domains) with cytoplasmic regions of ADGRV1 and USH2A. Interacts with PDZD7 (via MyTH4-FERM domains) (By similarity). Interacts with CALML4 (By similarity).</text>
</comment>
<comment type="subcellular location">
    <subcellularLocation>
        <location evidence="2">Cytoplasm</location>
    </subcellularLocation>
    <subcellularLocation>
        <location evidence="2">Cytoplasm</location>
        <location evidence="2">Cell cortex</location>
    </subcellularLocation>
    <subcellularLocation>
        <location evidence="2">Cytoplasm</location>
        <location evidence="2">Cytoskeleton</location>
    </subcellularLocation>
    <subcellularLocation>
        <location evidence="3">Synapse</location>
    </subcellularLocation>
    <text evidence="2 3">In the photoreceptor cells, mainly localized in the inner and base of outer segments as well as in the synaptic ending region (By similarity). In retinal pigment epithelial cells colocalizes with a subset of melanosomes, displays predominant localization to stress fiber-like structures and some localization to cytoplasmic puncta (By similarity). Detected at the tip of cochlear hair cell stereocilia (By similarity). The complex formed by MYO7A, USH1C and USH1G colocalizes with F-actin (By similarity).</text>
</comment>
<comment type="similarity">
    <text evidence="6">Belongs to the TRAFAC class myosin-kinesin ATPase superfamily. Myosin family.</text>
</comment>
<comment type="caution">
    <text evidence="6">Represents an unconventional myosin. This protein should not be confused with the conventional myosin-7 (MYH7).</text>
</comment>
<organism>
    <name type="scientific">Sus scrofa</name>
    <name type="common">Pig</name>
    <dbReference type="NCBI Taxonomy" id="9823"/>
    <lineage>
        <taxon>Eukaryota</taxon>
        <taxon>Metazoa</taxon>
        <taxon>Chordata</taxon>
        <taxon>Craniata</taxon>
        <taxon>Vertebrata</taxon>
        <taxon>Euteleostomi</taxon>
        <taxon>Mammalia</taxon>
        <taxon>Eutheria</taxon>
        <taxon>Laurasiatheria</taxon>
        <taxon>Artiodactyla</taxon>
        <taxon>Suina</taxon>
        <taxon>Suidae</taxon>
        <taxon>Sus</taxon>
    </lineage>
</organism>
<sequence>MVILQQGDYVWMDLRSGQEFDVPIGAVVKLCDSGQIQVVDDEGNEHWISPQNATHIKPMHPTSVTGMMEDMIQHLGDLNEAGILRNLLIRYRDHLIYTYTGSILVAVNPYQLLSIYSPEHIRQYTNKKIGEMPPHIFAIADNCYFNMKRNSRDQCCIISGESGAGKTESTKLILQFLAAISGQHSWIEQQVLEATPILEAFGNAKTIRNDNSSRFGKYIDIHFNKRGAIEGARIEQYLLEKSRVCRQAPDERNYHVFYCMLEGMSEEQKKKLGLGQATDYNYLAMGNCITCEGREDSQEYANIRSAMKVLMFTDTENWEISKLLAAILHLGNLQYKDRTFENLDACEVLFSTALATAASLLEVNPPDLMNCLTSRTLITRGETVSTPLSREQALDVRDAFVKGIYGRLFVWIVDKINAAIYKPPSQEVKNPRRSIGLLDIFGFENFAVNSFEQLCINFANEHLQQFFVRHVFKLEQEEYDLESIDWLHIEFTDNQDALDMIANKPMNIISLIDEESKFPKGTDTTMLHKLNSQHRLNSNYIPPKYNHETQFGINHFAGVVYYESQG</sequence>
<protein>
    <recommendedName>
        <fullName>Unconventional myosin-VIIa</fullName>
    </recommendedName>
</protein>
<name>MYO7A_PIG</name>
<dbReference type="EMBL" id="U34226">
    <property type="protein sequence ID" value="AAC48476.1"/>
    <property type="molecule type" value="mRNA"/>
</dbReference>
<dbReference type="EMBL" id="L29133">
    <property type="protein sequence ID" value="AAA20918.1"/>
    <property type="molecule type" value="mRNA"/>
</dbReference>
<dbReference type="PIR" id="A59285">
    <property type="entry name" value="A59285"/>
</dbReference>
<dbReference type="SMR" id="Q28970"/>
<dbReference type="STRING" id="9823.ENSSSCP00000015796"/>
<dbReference type="PaxDb" id="9823-ENSSSCP00000015796"/>
<dbReference type="PeptideAtlas" id="Q28970"/>
<dbReference type="eggNOG" id="KOG4229">
    <property type="taxonomic scope" value="Eukaryota"/>
</dbReference>
<dbReference type="InParanoid" id="Q28970"/>
<dbReference type="Proteomes" id="UP000008227">
    <property type="component" value="Unplaced"/>
</dbReference>
<dbReference type="Proteomes" id="UP000314985">
    <property type="component" value="Unplaced"/>
</dbReference>
<dbReference type="Proteomes" id="UP000694570">
    <property type="component" value="Unplaced"/>
</dbReference>
<dbReference type="Proteomes" id="UP000694571">
    <property type="component" value="Unplaced"/>
</dbReference>
<dbReference type="Proteomes" id="UP000694720">
    <property type="component" value="Unplaced"/>
</dbReference>
<dbReference type="Proteomes" id="UP000694722">
    <property type="component" value="Unplaced"/>
</dbReference>
<dbReference type="Proteomes" id="UP000694723">
    <property type="component" value="Unplaced"/>
</dbReference>
<dbReference type="Proteomes" id="UP000694724">
    <property type="component" value="Unplaced"/>
</dbReference>
<dbReference type="Proteomes" id="UP000694725">
    <property type="component" value="Unplaced"/>
</dbReference>
<dbReference type="Proteomes" id="UP000694726">
    <property type="component" value="Unplaced"/>
</dbReference>
<dbReference type="Proteomes" id="UP000694727">
    <property type="component" value="Unplaced"/>
</dbReference>
<dbReference type="Proteomes" id="UP000694728">
    <property type="component" value="Unplaced"/>
</dbReference>
<dbReference type="GO" id="GO:0015629">
    <property type="term" value="C:actin cytoskeleton"/>
    <property type="evidence" value="ECO:0000318"/>
    <property type="project" value="GO_Central"/>
</dbReference>
<dbReference type="GO" id="GO:0005938">
    <property type="term" value="C:cell cortex"/>
    <property type="evidence" value="ECO:0007669"/>
    <property type="project" value="UniProtKB-SubCell"/>
</dbReference>
<dbReference type="GO" id="GO:0005737">
    <property type="term" value="C:cytoplasm"/>
    <property type="evidence" value="ECO:0000318"/>
    <property type="project" value="GO_Central"/>
</dbReference>
<dbReference type="GO" id="GO:0016020">
    <property type="term" value="C:membrane"/>
    <property type="evidence" value="ECO:0000318"/>
    <property type="project" value="GO_Central"/>
</dbReference>
<dbReference type="GO" id="GO:0005902">
    <property type="term" value="C:microvillus"/>
    <property type="evidence" value="ECO:0000318"/>
    <property type="project" value="GO_Central"/>
</dbReference>
<dbReference type="GO" id="GO:0016459">
    <property type="term" value="C:myosin complex"/>
    <property type="evidence" value="ECO:0007669"/>
    <property type="project" value="UniProtKB-KW"/>
</dbReference>
<dbReference type="GO" id="GO:0032420">
    <property type="term" value="C:stereocilium"/>
    <property type="evidence" value="ECO:0000250"/>
    <property type="project" value="UniProtKB"/>
</dbReference>
<dbReference type="GO" id="GO:0120044">
    <property type="term" value="C:stereocilium base"/>
    <property type="evidence" value="ECO:0000250"/>
    <property type="project" value="UniProtKB"/>
</dbReference>
<dbReference type="GO" id="GO:0045202">
    <property type="term" value="C:synapse"/>
    <property type="evidence" value="ECO:0007669"/>
    <property type="project" value="UniProtKB-SubCell"/>
</dbReference>
<dbReference type="GO" id="GO:0051015">
    <property type="term" value="F:actin filament binding"/>
    <property type="evidence" value="ECO:0000318"/>
    <property type="project" value="GO_Central"/>
</dbReference>
<dbReference type="GO" id="GO:0005524">
    <property type="term" value="F:ATP binding"/>
    <property type="evidence" value="ECO:0007669"/>
    <property type="project" value="UniProtKB-KW"/>
</dbReference>
<dbReference type="GO" id="GO:0000146">
    <property type="term" value="F:microfilament motor activity"/>
    <property type="evidence" value="ECO:0000318"/>
    <property type="project" value="GO_Central"/>
</dbReference>
<dbReference type="GO" id="GO:0007015">
    <property type="term" value="P:actin filament organization"/>
    <property type="evidence" value="ECO:0000318"/>
    <property type="project" value="GO_Central"/>
</dbReference>
<dbReference type="GO" id="GO:0030048">
    <property type="term" value="P:actin filament-based movement"/>
    <property type="evidence" value="ECO:0000318"/>
    <property type="project" value="GO_Central"/>
</dbReference>
<dbReference type="GO" id="GO:0042490">
    <property type="term" value="P:mechanoreceptor differentiation"/>
    <property type="evidence" value="ECO:0000250"/>
    <property type="project" value="UniProtKB"/>
</dbReference>
<dbReference type="GO" id="GO:0008104">
    <property type="term" value="P:protein localization"/>
    <property type="evidence" value="ECO:0000250"/>
    <property type="project" value="UniProtKB"/>
</dbReference>
<dbReference type="GO" id="GO:0007605">
    <property type="term" value="P:sensory perception of sound"/>
    <property type="evidence" value="ECO:0000318"/>
    <property type="project" value="GO_Central"/>
</dbReference>
<dbReference type="CDD" id="cd01381">
    <property type="entry name" value="MYSc_Myo7"/>
    <property type="match status" value="1"/>
</dbReference>
<dbReference type="FunFam" id="1.10.10.820:FF:000001">
    <property type="entry name" value="Myosin heavy chain"/>
    <property type="match status" value="1"/>
</dbReference>
<dbReference type="FunFam" id="3.40.850.10:FF:000007">
    <property type="entry name" value="Myosin VIIA"/>
    <property type="match status" value="1"/>
</dbReference>
<dbReference type="FunFam" id="1.20.120.720:FF:000008">
    <property type="entry name" value="Unconventional myosin-VIIa"/>
    <property type="match status" value="1"/>
</dbReference>
<dbReference type="FunFam" id="1.20.58.530:FF:000008">
    <property type="entry name" value="unconventional myosin-VIIa"/>
    <property type="match status" value="1"/>
</dbReference>
<dbReference type="Gene3D" id="1.10.10.820">
    <property type="match status" value="1"/>
</dbReference>
<dbReference type="Gene3D" id="1.20.58.530">
    <property type="match status" value="1"/>
</dbReference>
<dbReference type="Gene3D" id="3.40.850.10">
    <property type="entry name" value="Kinesin motor domain"/>
    <property type="match status" value="1"/>
</dbReference>
<dbReference type="Gene3D" id="1.20.120.720">
    <property type="entry name" value="Myosin VI head, motor domain, U50 subdomain"/>
    <property type="match status" value="1"/>
</dbReference>
<dbReference type="InterPro" id="IPR051724">
    <property type="entry name" value="Actin_motor_Myosin"/>
</dbReference>
<dbReference type="InterPro" id="IPR036961">
    <property type="entry name" value="Kinesin_motor_dom_sf"/>
</dbReference>
<dbReference type="InterPro" id="IPR001609">
    <property type="entry name" value="Myosin_head_motor_dom-like"/>
</dbReference>
<dbReference type="InterPro" id="IPR036106">
    <property type="entry name" value="MYSc_Myo7"/>
</dbReference>
<dbReference type="InterPro" id="IPR027417">
    <property type="entry name" value="P-loop_NTPase"/>
</dbReference>
<dbReference type="PANTHER" id="PTHR46049">
    <property type="entry name" value="AGAP003327-PA"/>
    <property type="match status" value="1"/>
</dbReference>
<dbReference type="PANTHER" id="PTHR46049:SF10">
    <property type="entry name" value="MYOSIN VIIA"/>
    <property type="match status" value="1"/>
</dbReference>
<dbReference type="Pfam" id="PF00063">
    <property type="entry name" value="Myosin_head"/>
    <property type="match status" value="1"/>
</dbReference>
<dbReference type="Pfam" id="PF24123">
    <property type="entry name" value="Myosin_VII_N"/>
    <property type="match status" value="1"/>
</dbReference>
<dbReference type="PRINTS" id="PR00193">
    <property type="entry name" value="MYOSINHEAVY"/>
</dbReference>
<dbReference type="SMART" id="SM00242">
    <property type="entry name" value="MYSc"/>
    <property type="match status" value="1"/>
</dbReference>
<dbReference type="SUPFAM" id="SSF52540">
    <property type="entry name" value="P-loop containing nucleoside triphosphate hydrolases"/>
    <property type="match status" value="1"/>
</dbReference>
<dbReference type="PROSITE" id="PS51456">
    <property type="entry name" value="MYOSIN_MOTOR"/>
    <property type="match status" value="1"/>
</dbReference>
<feature type="chain" id="PRO_0000123468" description="Unconventional myosin-VIIa">
    <location>
        <begin position="1"/>
        <end position="566" status="greater than"/>
    </location>
</feature>
<feature type="domain" description="Myosin motor" evidence="5">
    <location>
        <begin position="67"/>
        <end position="566" status="greater than"/>
    </location>
</feature>
<feature type="binding site" evidence="4">
    <location>
        <begin position="160"/>
        <end position="167"/>
    </location>
    <ligand>
        <name>ATP</name>
        <dbReference type="ChEBI" id="CHEBI:30616"/>
    </ligand>
</feature>
<feature type="non-terminal residue">
    <location>
        <position position="566"/>
    </location>
</feature>